<comment type="function">
    <text evidence="1">Rhomboid-type serine protease that catalyzes intramembrane proteolysis.</text>
</comment>
<comment type="catalytic activity">
    <reaction evidence="1">
        <text>Cleaves type-1 transmembrane domains using a catalytic dyad composed of serine and histidine that are contributed by different transmembrane domains.</text>
        <dbReference type="EC" id="3.4.21.105"/>
    </reaction>
</comment>
<comment type="subcellular location">
    <subcellularLocation>
        <location evidence="1">Cell inner membrane</location>
        <topology evidence="1">Multi-pass membrane protein</topology>
    </subcellularLocation>
</comment>
<comment type="similarity">
    <text evidence="1">Belongs to the peptidase S54 family.</text>
</comment>
<protein>
    <recommendedName>
        <fullName evidence="1">Rhomboid protease GlpG</fullName>
        <ecNumber evidence="1">3.4.21.105</ecNumber>
    </recommendedName>
    <alternativeName>
        <fullName evidence="1">Intramembrane serine protease</fullName>
    </alternativeName>
</protein>
<reference key="1">
    <citation type="journal article" date="2011" name="J. Bacteriol.">
        <title>Comparative genomics of 28 Salmonella enterica isolates: evidence for CRISPR-mediated adaptive sublineage evolution.</title>
        <authorList>
            <person name="Fricke W.F."/>
            <person name="Mammel M.K."/>
            <person name="McDermott P.F."/>
            <person name="Tartera C."/>
            <person name="White D.G."/>
            <person name="Leclerc J.E."/>
            <person name="Ravel J."/>
            <person name="Cebula T.A."/>
        </authorList>
    </citation>
    <scope>NUCLEOTIDE SEQUENCE [LARGE SCALE GENOMIC DNA]</scope>
    <source>
        <strain>SL476</strain>
    </source>
</reference>
<proteinExistence type="inferred from homology"/>
<feature type="chain" id="PRO_1000147865" description="Rhomboid protease GlpG">
    <location>
        <begin position="1"/>
        <end position="276"/>
    </location>
</feature>
<feature type="transmembrane region" description="Helical" evidence="1">
    <location>
        <begin position="94"/>
        <end position="114"/>
    </location>
</feature>
<feature type="transmembrane region" description="Helical" evidence="1">
    <location>
        <begin position="142"/>
        <end position="162"/>
    </location>
</feature>
<feature type="transmembrane region" description="Helical" evidence="1">
    <location>
        <begin position="169"/>
        <end position="189"/>
    </location>
</feature>
<feature type="transmembrane region" description="Helical" evidence="1">
    <location>
        <begin position="192"/>
        <end position="212"/>
    </location>
</feature>
<feature type="transmembrane region" description="Helical" evidence="1">
    <location>
        <begin position="229"/>
        <end position="249"/>
    </location>
</feature>
<feature type="transmembrane region" description="Helical" evidence="1">
    <location>
        <begin position="250"/>
        <end position="270"/>
    </location>
</feature>
<feature type="active site" description="Nucleophile" evidence="1">
    <location>
        <position position="201"/>
    </location>
</feature>
<feature type="active site" evidence="1">
    <location>
        <position position="254"/>
    </location>
</feature>
<keyword id="KW-0997">Cell inner membrane</keyword>
<keyword id="KW-1003">Cell membrane</keyword>
<keyword id="KW-0378">Hydrolase</keyword>
<keyword id="KW-0472">Membrane</keyword>
<keyword id="KW-0645">Protease</keyword>
<keyword id="KW-0720">Serine protease</keyword>
<keyword id="KW-0812">Transmembrane</keyword>
<keyword id="KW-1133">Transmembrane helix</keyword>
<gene>
    <name evidence="1" type="primary">glpG</name>
    <name type="ordered locus">SeHA_C3832</name>
</gene>
<name>GLPG_SALHS</name>
<sequence>MLMITSFANPRVAQAFVDYMATQGVILTIQQHNQSDIWLADESQAERVRGELARFIENPGDPRYLAASWQSGQTNSGLRYRRFPFLATLRERAGPVTWIVMLACVLVYIAMSLIGDQTVMVWLAWPFDPVLKFEVWRYFTHIFMHFSLMHILFNLLWWWYLGGAVEKRLGSGKLIVITVISALLSGYVQQKFSGPWFGGLSGVVYALMGYVWLRGERDPQSGIYLQRGLIIFALLWIVAGWFDWFGMSMANGAHIAGLIVGLAMAFVDTLNARKRT</sequence>
<dbReference type="EC" id="3.4.21.105" evidence="1"/>
<dbReference type="EMBL" id="CP001120">
    <property type="protein sequence ID" value="ACF69354.1"/>
    <property type="molecule type" value="Genomic_DNA"/>
</dbReference>
<dbReference type="RefSeq" id="WP_000928699.1">
    <property type="nucleotide sequence ID" value="NC_011083.1"/>
</dbReference>
<dbReference type="SMR" id="B4TKV0"/>
<dbReference type="MEROPS" id="S54.016"/>
<dbReference type="KEGG" id="seh:SeHA_C3832"/>
<dbReference type="HOGENOM" id="CLU_058989_0_0_6"/>
<dbReference type="Proteomes" id="UP000001866">
    <property type="component" value="Chromosome"/>
</dbReference>
<dbReference type="GO" id="GO:0005886">
    <property type="term" value="C:plasma membrane"/>
    <property type="evidence" value="ECO:0007669"/>
    <property type="project" value="UniProtKB-SubCell"/>
</dbReference>
<dbReference type="GO" id="GO:0004252">
    <property type="term" value="F:serine-type endopeptidase activity"/>
    <property type="evidence" value="ECO:0007669"/>
    <property type="project" value="UniProtKB-UniRule"/>
</dbReference>
<dbReference type="GO" id="GO:0006508">
    <property type="term" value="P:proteolysis"/>
    <property type="evidence" value="ECO:0007669"/>
    <property type="project" value="UniProtKB-UniRule"/>
</dbReference>
<dbReference type="FunFam" id="1.20.1540.10:FF:000003">
    <property type="entry name" value="Rhomboid protease GlpG"/>
    <property type="match status" value="1"/>
</dbReference>
<dbReference type="FunFam" id="3.30.70.2350:FF:000001">
    <property type="entry name" value="Rhomboid protease GlpG"/>
    <property type="match status" value="1"/>
</dbReference>
<dbReference type="Gene3D" id="3.30.70.2350">
    <property type="match status" value="1"/>
</dbReference>
<dbReference type="Gene3D" id="1.20.1540.10">
    <property type="entry name" value="Rhomboid-like"/>
    <property type="match status" value="1"/>
</dbReference>
<dbReference type="HAMAP" id="MF_01594">
    <property type="entry name" value="Rhomboid_GlpG"/>
    <property type="match status" value="1"/>
</dbReference>
<dbReference type="InterPro" id="IPR038236">
    <property type="entry name" value="GlpG_N_sf"/>
</dbReference>
<dbReference type="InterPro" id="IPR022732">
    <property type="entry name" value="Peptidase_S54_GlpG_N"/>
</dbReference>
<dbReference type="InterPro" id="IPR022764">
    <property type="entry name" value="Peptidase_S54_rhomboid_dom"/>
</dbReference>
<dbReference type="InterPro" id="IPR035952">
    <property type="entry name" value="Rhomboid-like_sf"/>
</dbReference>
<dbReference type="InterPro" id="IPR023662">
    <property type="entry name" value="Rhomboid_protease_GlpG"/>
</dbReference>
<dbReference type="NCBIfam" id="NF008155">
    <property type="entry name" value="PRK10907.1"/>
    <property type="match status" value="1"/>
</dbReference>
<dbReference type="NCBIfam" id="TIGR04239">
    <property type="entry name" value="rhombo_GlpG"/>
    <property type="match status" value="1"/>
</dbReference>
<dbReference type="PANTHER" id="PTHR43066:SF26">
    <property type="entry name" value="RHOMBOID PROTEASE GLPG"/>
    <property type="match status" value="1"/>
</dbReference>
<dbReference type="PANTHER" id="PTHR43066">
    <property type="entry name" value="RHOMBOID-RELATED PROTEIN"/>
    <property type="match status" value="1"/>
</dbReference>
<dbReference type="Pfam" id="PF01694">
    <property type="entry name" value="Rhomboid"/>
    <property type="match status" value="1"/>
</dbReference>
<dbReference type="Pfam" id="PF12122">
    <property type="entry name" value="Rhomboid_N"/>
    <property type="match status" value="1"/>
</dbReference>
<dbReference type="SUPFAM" id="SSF144091">
    <property type="entry name" value="Rhomboid-like"/>
    <property type="match status" value="1"/>
</dbReference>
<organism>
    <name type="scientific">Salmonella heidelberg (strain SL476)</name>
    <dbReference type="NCBI Taxonomy" id="454169"/>
    <lineage>
        <taxon>Bacteria</taxon>
        <taxon>Pseudomonadati</taxon>
        <taxon>Pseudomonadota</taxon>
        <taxon>Gammaproteobacteria</taxon>
        <taxon>Enterobacterales</taxon>
        <taxon>Enterobacteriaceae</taxon>
        <taxon>Salmonella</taxon>
    </lineage>
</organism>
<evidence type="ECO:0000255" key="1">
    <source>
        <dbReference type="HAMAP-Rule" id="MF_01594"/>
    </source>
</evidence>
<accession>B4TKV0</accession>